<feature type="initiator methionine" description="Removed" evidence="3">
    <location>
        <position position="1"/>
    </location>
</feature>
<feature type="chain" id="PRO_0000057547" description="Beta-crystallin A4">
    <location>
        <begin position="2"/>
        <end position="196"/>
    </location>
</feature>
<feature type="domain" description="Beta/gamma crystallin 'Greek key' 1" evidence="2">
    <location>
        <begin position="12"/>
        <end position="51"/>
    </location>
</feature>
<feature type="domain" description="Beta/gamma crystallin 'Greek key' 2" evidence="2">
    <location>
        <begin position="52"/>
        <end position="98"/>
    </location>
</feature>
<feature type="domain" description="Beta/gamma crystallin 'Greek key' 3" evidence="2">
    <location>
        <begin position="105"/>
        <end position="146"/>
    </location>
</feature>
<feature type="domain" description="Beta/gamma crystallin 'Greek key' 4" evidence="2">
    <location>
        <begin position="147"/>
        <end position="195"/>
    </location>
</feature>
<feature type="region of interest" description="N-terminal arm">
    <location>
        <begin position="2"/>
        <end position="11"/>
    </location>
</feature>
<feature type="region of interest" description="Connecting peptide">
    <location>
        <begin position="99"/>
        <end position="104"/>
    </location>
</feature>
<feature type="modified residue" description="N-acetylthreonine" evidence="3">
    <location>
        <position position="2"/>
    </location>
</feature>
<reference key="1">
    <citation type="journal article" date="2002" name="Invest. Ophthalmol. Vis. Sci.">
        <title>Lens proteomics: analysis of rat crystallin sequences and two-dimensional electrophoresis map.</title>
        <authorList>
            <person name="Lampi K.J."/>
            <person name="Shih M."/>
            <person name="Ueda Y."/>
            <person name="Shearer T.R."/>
            <person name="David L.L."/>
        </authorList>
    </citation>
    <scope>NUCLEOTIDE SEQUENCE [MRNA]</scope>
    <scope>PROTEIN SEQUENCE OF 2-196</scope>
    <scope>ACETYLATION AT THR-2</scope>
    <scope>MASS SPECTROMETRY</scope>
    <source>
        <strain>Sprague-Dawley</strain>
        <tissue>Lens</tissue>
    </source>
</reference>
<reference key="2">
    <citation type="journal article" date="1993" name="FEBS Lett.">
        <title>Beta-crystallins insolubilized by calpain II in vitro contain cleavage sites similar to beta-crystallins insolubilized during cataract.</title>
        <authorList>
            <person name="David L.L."/>
            <person name="Shearer T.R."/>
        </authorList>
    </citation>
    <scope>PROTEIN SEQUENCE OF 5-10</scope>
</reference>
<accession>P56374</accession>
<protein>
    <recommendedName>
        <fullName>Beta-crystallin A4</fullName>
    </recommendedName>
    <alternativeName>
        <fullName>Beta-A4 crystallin</fullName>
    </alternativeName>
</protein>
<keyword id="KW-0007">Acetylation</keyword>
<keyword id="KW-0903">Direct protein sequencing</keyword>
<keyword id="KW-0273">Eye lens protein</keyword>
<keyword id="KW-1185">Reference proteome</keyword>
<keyword id="KW-0677">Repeat</keyword>
<dbReference type="EMBL" id="AF013247">
    <property type="protein sequence ID" value="AAB67117.1"/>
    <property type="molecule type" value="mRNA"/>
</dbReference>
<dbReference type="RefSeq" id="NP_113877.1">
    <property type="nucleotide sequence ID" value="NM_031689.2"/>
</dbReference>
<dbReference type="RefSeq" id="XP_017453936.1">
    <property type="nucleotide sequence ID" value="XM_017598447.2"/>
</dbReference>
<dbReference type="RefSeq" id="XP_038945650.1">
    <property type="nucleotide sequence ID" value="XM_039089722.2"/>
</dbReference>
<dbReference type="SMR" id="P56374"/>
<dbReference type="FunCoup" id="P56374">
    <property type="interactions" value="3"/>
</dbReference>
<dbReference type="STRING" id="10116.ENSRNOP00000066572"/>
<dbReference type="iPTMnet" id="P56374"/>
<dbReference type="PhosphoSitePlus" id="P56374"/>
<dbReference type="PaxDb" id="10116-ENSRNOP00000066572"/>
<dbReference type="Ensembl" id="ENSRNOT00000073763.2">
    <property type="protein sequence ID" value="ENSRNOP00000066572.1"/>
    <property type="gene ID" value="ENSRNOG00000049770.2"/>
</dbReference>
<dbReference type="GeneID" id="64348"/>
<dbReference type="KEGG" id="rno:64348"/>
<dbReference type="AGR" id="RGD:61962"/>
<dbReference type="CTD" id="1413"/>
<dbReference type="RGD" id="61962">
    <property type="gene designation" value="Cryba4"/>
</dbReference>
<dbReference type="eggNOG" id="ENOG502QTF8">
    <property type="taxonomic scope" value="Eukaryota"/>
</dbReference>
<dbReference type="GeneTree" id="ENSGT00940000160372"/>
<dbReference type="HOGENOM" id="CLU_081883_0_0_1"/>
<dbReference type="InParanoid" id="P56374"/>
<dbReference type="OMA" id="EFTSECY"/>
<dbReference type="OrthoDB" id="8688215at2759"/>
<dbReference type="PhylomeDB" id="P56374"/>
<dbReference type="PRO" id="PR:P56374"/>
<dbReference type="Proteomes" id="UP000002494">
    <property type="component" value="Chromosome 12"/>
</dbReference>
<dbReference type="Bgee" id="ENSRNOG00000049770">
    <property type="expression patterns" value="Expressed in ovary and 14 other cell types or tissues"/>
</dbReference>
<dbReference type="GO" id="GO:0042802">
    <property type="term" value="F:identical protein binding"/>
    <property type="evidence" value="ECO:0000266"/>
    <property type="project" value="RGD"/>
</dbReference>
<dbReference type="GO" id="GO:0005212">
    <property type="term" value="F:structural constituent of eye lens"/>
    <property type="evidence" value="ECO:0000314"/>
    <property type="project" value="RGD"/>
</dbReference>
<dbReference type="GO" id="GO:0043010">
    <property type="term" value="P:camera-type eye development"/>
    <property type="evidence" value="ECO:0000266"/>
    <property type="project" value="RGD"/>
</dbReference>
<dbReference type="GO" id="GO:0002088">
    <property type="term" value="P:lens development in camera-type eye"/>
    <property type="evidence" value="ECO:0000318"/>
    <property type="project" value="GO_Central"/>
</dbReference>
<dbReference type="GO" id="GO:0007601">
    <property type="term" value="P:visual perception"/>
    <property type="evidence" value="ECO:0000266"/>
    <property type="project" value="RGD"/>
</dbReference>
<dbReference type="FunFam" id="2.60.20.10:FF:000004">
    <property type="entry name" value="Crystallin beta A4"/>
    <property type="match status" value="1"/>
</dbReference>
<dbReference type="FunFam" id="2.60.20.10:FF:000002">
    <property type="entry name" value="Crystallin, beta B2"/>
    <property type="match status" value="1"/>
</dbReference>
<dbReference type="Gene3D" id="2.60.20.10">
    <property type="entry name" value="Crystallins"/>
    <property type="match status" value="2"/>
</dbReference>
<dbReference type="InterPro" id="IPR050252">
    <property type="entry name" value="Beta/Gamma-Crystallin"/>
</dbReference>
<dbReference type="InterPro" id="IPR001064">
    <property type="entry name" value="Beta/gamma_crystallin"/>
</dbReference>
<dbReference type="InterPro" id="IPR011024">
    <property type="entry name" value="G_crystallin-like"/>
</dbReference>
<dbReference type="PANTHER" id="PTHR11818:SF19">
    <property type="entry name" value="BETA-CRYSTALLIN A4"/>
    <property type="match status" value="1"/>
</dbReference>
<dbReference type="PANTHER" id="PTHR11818">
    <property type="entry name" value="BETA/GAMMA CRYSTALLIN"/>
    <property type="match status" value="1"/>
</dbReference>
<dbReference type="Pfam" id="PF00030">
    <property type="entry name" value="Crystall"/>
    <property type="match status" value="2"/>
</dbReference>
<dbReference type="PRINTS" id="PR01367">
    <property type="entry name" value="BGCRYSTALLIN"/>
</dbReference>
<dbReference type="SMART" id="SM00247">
    <property type="entry name" value="XTALbg"/>
    <property type="match status" value="2"/>
</dbReference>
<dbReference type="SUPFAM" id="SSF49695">
    <property type="entry name" value="gamma-Crystallin-like"/>
    <property type="match status" value="1"/>
</dbReference>
<dbReference type="PROSITE" id="PS50915">
    <property type="entry name" value="CRYSTALLIN_BETA_GAMMA"/>
    <property type="match status" value="4"/>
</dbReference>
<sequence>MTLQCTKSAGHWRVVVWDEEGFQGRRHEFTAECPSVLDLGFETVRSLKVLSGAWVGFEHAGFQGQQYVLERGDYPGWDAWGGNTAYPAERLTSFRPVACANHRDSRLTIFEQENFLGRKGELSDDYPSLQAMGWDGTEVGSFHVQSGAWVCSQFPGYRGFQYVLESDHHSGDYKHFREWGSHAHTFQVQSVRRIQQ</sequence>
<proteinExistence type="evidence at protein level"/>
<comment type="function">
    <text>Crystallins are the dominant structural components of the vertebrate eye lens.</text>
</comment>
<comment type="subunit">
    <text evidence="1">Homo/heterodimer, or complexes of higher-order. The structure of beta-crystallin oligomers seems to be stabilized through interactions between the N-terminal arms (By similarity).</text>
</comment>
<comment type="domain">
    <text>Has a two-domain beta-structure, folded into four very similar Greek key motifs.</text>
</comment>
<comment type="mass spectrometry"/>
<comment type="similarity">
    <text evidence="4">Belongs to the beta/gamma-crystallin family.</text>
</comment>
<name>CRBA4_RAT</name>
<organism>
    <name type="scientific">Rattus norvegicus</name>
    <name type="common">Rat</name>
    <dbReference type="NCBI Taxonomy" id="10116"/>
    <lineage>
        <taxon>Eukaryota</taxon>
        <taxon>Metazoa</taxon>
        <taxon>Chordata</taxon>
        <taxon>Craniata</taxon>
        <taxon>Vertebrata</taxon>
        <taxon>Euteleostomi</taxon>
        <taxon>Mammalia</taxon>
        <taxon>Eutheria</taxon>
        <taxon>Euarchontoglires</taxon>
        <taxon>Glires</taxon>
        <taxon>Rodentia</taxon>
        <taxon>Myomorpha</taxon>
        <taxon>Muroidea</taxon>
        <taxon>Muridae</taxon>
        <taxon>Murinae</taxon>
        <taxon>Rattus</taxon>
    </lineage>
</organism>
<gene>
    <name type="primary">Cryba4</name>
</gene>
<evidence type="ECO:0000250" key="1"/>
<evidence type="ECO:0000255" key="2">
    <source>
        <dbReference type="PROSITE-ProRule" id="PRU00028"/>
    </source>
</evidence>
<evidence type="ECO:0000269" key="3">
    <source>
    </source>
</evidence>
<evidence type="ECO:0000305" key="4"/>